<dbReference type="EC" id="4.2.1.20" evidence="1"/>
<dbReference type="EMBL" id="CP000001">
    <property type="protein sequence ID" value="AAU19111.1"/>
    <property type="molecule type" value="Genomic_DNA"/>
</dbReference>
<dbReference type="RefSeq" id="WP_000537944.1">
    <property type="nucleotide sequence ID" value="NZ_CP009968.1"/>
</dbReference>
<dbReference type="SMR" id="Q63EC6"/>
<dbReference type="KEGG" id="bcz:BCE33L1136"/>
<dbReference type="PATRIC" id="fig|288681.22.peg.4428"/>
<dbReference type="UniPathway" id="UPA00035">
    <property type="reaction ID" value="UER00044"/>
</dbReference>
<dbReference type="Proteomes" id="UP000002612">
    <property type="component" value="Chromosome"/>
</dbReference>
<dbReference type="GO" id="GO:0005829">
    <property type="term" value="C:cytosol"/>
    <property type="evidence" value="ECO:0007669"/>
    <property type="project" value="TreeGrafter"/>
</dbReference>
<dbReference type="GO" id="GO:0004834">
    <property type="term" value="F:tryptophan synthase activity"/>
    <property type="evidence" value="ECO:0007669"/>
    <property type="project" value="UniProtKB-UniRule"/>
</dbReference>
<dbReference type="CDD" id="cd04724">
    <property type="entry name" value="Tryptophan_synthase_alpha"/>
    <property type="match status" value="1"/>
</dbReference>
<dbReference type="FunFam" id="3.20.20.70:FF:000037">
    <property type="entry name" value="Tryptophan synthase alpha chain"/>
    <property type="match status" value="1"/>
</dbReference>
<dbReference type="Gene3D" id="3.20.20.70">
    <property type="entry name" value="Aldolase class I"/>
    <property type="match status" value="1"/>
</dbReference>
<dbReference type="HAMAP" id="MF_00131">
    <property type="entry name" value="Trp_synth_alpha"/>
    <property type="match status" value="1"/>
</dbReference>
<dbReference type="InterPro" id="IPR013785">
    <property type="entry name" value="Aldolase_TIM"/>
</dbReference>
<dbReference type="InterPro" id="IPR011060">
    <property type="entry name" value="RibuloseP-bd_barrel"/>
</dbReference>
<dbReference type="InterPro" id="IPR018204">
    <property type="entry name" value="Trp_synthase_alpha_AS"/>
</dbReference>
<dbReference type="InterPro" id="IPR002028">
    <property type="entry name" value="Trp_synthase_suA"/>
</dbReference>
<dbReference type="NCBIfam" id="TIGR00262">
    <property type="entry name" value="trpA"/>
    <property type="match status" value="1"/>
</dbReference>
<dbReference type="PANTHER" id="PTHR43406:SF1">
    <property type="entry name" value="TRYPTOPHAN SYNTHASE ALPHA CHAIN, CHLOROPLASTIC"/>
    <property type="match status" value="1"/>
</dbReference>
<dbReference type="PANTHER" id="PTHR43406">
    <property type="entry name" value="TRYPTOPHAN SYNTHASE, ALPHA CHAIN"/>
    <property type="match status" value="1"/>
</dbReference>
<dbReference type="Pfam" id="PF00290">
    <property type="entry name" value="Trp_syntA"/>
    <property type="match status" value="1"/>
</dbReference>
<dbReference type="SUPFAM" id="SSF51366">
    <property type="entry name" value="Ribulose-phoshate binding barrel"/>
    <property type="match status" value="1"/>
</dbReference>
<dbReference type="PROSITE" id="PS00167">
    <property type="entry name" value="TRP_SYNTHASE_ALPHA"/>
    <property type="match status" value="1"/>
</dbReference>
<comment type="function">
    <text evidence="1">The alpha subunit is responsible for the aldol cleavage of indoleglycerol phosphate to indole and glyceraldehyde 3-phosphate.</text>
</comment>
<comment type="catalytic activity">
    <reaction evidence="1">
        <text>(1S,2R)-1-C-(indol-3-yl)glycerol 3-phosphate + L-serine = D-glyceraldehyde 3-phosphate + L-tryptophan + H2O</text>
        <dbReference type="Rhea" id="RHEA:10532"/>
        <dbReference type="ChEBI" id="CHEBI:15377"/>
        <dbReference type="ChEBI" id="CHEBI:33384"/>
        <dbReference type="ChEBI" id="CHEBI:57912"/>
        <dbReference type="ChEBI" id="CHEBI:58866"/>
        <dbReference type="ChEBI" id="CHEBI:59776"/>
        <dbReference type="EC" id="4.2.1.20"/>
    </reaction>
</comment>
<comment type="pathway">
    <text evidence="1">Amino-acid biosynthesis; L-tryptophan biosynthesis; L-tryptophan from chorismate: step 5/5.</text>
</comment>
<comment type="subunit">
    <text evidence="1">Tetramer of two alpha and two beta chains.</text>
</comment>
<comment type="similarity">
    <text evidence="1">Belongs to the TrpA family.</text>
</comment>
<feature type="chain" id="PRO_0000098735" description="Tryptophan synthase alpha chain">
    <location>
        <begin position="1"/>
        <end position="258"/>
    </location>
</feature>
<feature type="active site" description="Proton acceptor" evidence="1">
    <location>
        <position position="47"/>
    </location>
</feature>
<feature type="active site" description="Proton acceptor" evidence="1">
    <location>
        <position position="58"/>
    </location>
</feature>
<reference key="1">
    <citation type="journal article" date="2006" name="J. Bacteriol.">
        <title>Pathogenomic sequence analysis of Bacillus cereus and Bacillus thuringiensis isolates closely related to Bacillus anthracis.</title>
        <authorList>
            <person name="Han C.S."/>
            <person name="Xie G."/>
            <person name="Challacombe J.F."/>
            <person name="Altherr M.R."/>
            <person name="Bhotika S.S."/>
            <person name="Bruce D."/>
            <person name="Campbell C.S."/>
            <person name="Campbell M.L."/>
            <person name="Chen J."/>
            <person name="Chertkov O."/>
            <person name="Cleland C."/>
            <person name="Dimitrijevic M."/>
            <person name="Doggett N.A."/>
            <person name="Fawcett J.J."/>
            <person name="Glavina T."/>
            <person name="Goodwin L.A."/>
            <person name="Hill K.K."/>
            <person name="Hitchcock P."/>
            <person name="Jackson P.J."/>
            <person name="Keim P."/>
            <person name="Kewalramani A.R."/>
            <person name="Longmire J."/>
            <person name="Lucas S."/>
            <person name="Malfatti S."/>
            <person name="McMurry K."/>
            <person name="Meincke L.J."/>
            <person name="Misra M."/>
            <person name="Moseman B.L."/>
            <person name="Mundt M."/>
            <person name="Munk A.C."/>
            <person name="Okinaka R.T."/>
            <person name="Parson-Quintana B."/>
            <person name="Reilly L.P."/>
            <person name="Richardson P."/>
            <person name="Robinson D.L."/>
            <person name="Rubin E."/>
            <person name="Saunders E."/>
            <person name="Tapia R."/>
            <person name="Tesmer J.G."/>
            <person name="Thayer N."/>
            <person name="Thompson L.S."/>
            <person name="Tice H."/>
            <person name="Ticknor L.O."/>
            <person name="Wills P.L."/>
            <person name="Brettin T.S."/>
            <person name="Gilna P."/>
        </authorList>
    </citation>
    <scope>NUCLEOTIDE SEQUENCE [LARGE SCALE GENOMIC DNA]</scope>
    <source>
        <strain>ZK / E33L</strain>
    </source>
</reference>
<name>TRPA_BACCZ</name>
<protein>
    <recommendedName>
        <fullName evidence="1">Tryptophan synthase alpha chain</fullName>
        <ecNumber evidence="1">4.2.1.20</ecNumber>
    </recommendedName>
</protein>
<proteinExistence type="inferred from homology"/>
<evidence type="ECO:0000255" key="1">
    <source>
        <dbReference type="HAMAP-Rule" id="MF_00131"/>
    </source>
</evidence>
<keyword id="KW-0028">Amino-acid biosynthesis</keyword>
<keyword id="KW-0057">Aromatic amino acid biosynthesis</keyword>
<keyword id="KW-0456">Lyase</keyword>
<keyword id="KW-0822">Tryptophan biosynthesis</keyword>
<accession>Q63EC6</accession>
<gene>
    <name evidence="1" type="primary">trpA</name>
    <name type="ordered locus">BCE33L1136</name>
</gene>
<organism>
    <name type="scientific">Bacillus cereus (strain ZK / E33L)</name>
    <dbReference type="NCBI Taxonomy" id="288681"/>
    <lineage>
        <taxon>Bacteria</taxon>
        <taxon>Bacillati</taxon>
        <taxon>Bacillota</taxon>
        <taxon>Bacilli</taxon>
        <taxon>Bacillales</taxon>
        <taxon>Bacillaceae</taxon>
        <taxon>Bacillus</taxon>
        <taxon>Bacillus cereus group</taxon>
    </lineage>
</organism>
<sequence length="258" mass="28327">MGVERIQAAFENGKKAFIPYVMGGDGGLEILKERIRFLDEAGASIVEIGIPFSDPVADGPTIQRAGKRALDSGVTVKGIFQALIEARKEVQIPFVLMTYLNPVLAFGKERFIENCMEAGVDGIIVPDLPYEEQDIIAPLLREANIALIPLVTVTSPIERIKKITSESEGFVYAVTVAGVTGVRQNFKDEIHSYLEKVKSHTHLPVVAGFGISTKEHVEEMVTICDGVVVGSKVIELLENEKREEICEFIQATKQKEEA</sequence>